<accession>P45056</accession>
<name>MRAZ_HAEIN</name>
<dbReference type="EMBL" id="L42023">
    <property type="protein sequence ID" value="AAC22784.1"/>
    <property type="molecule type" value="Genomic_DNA"/>
</dbReference>
<dbReference type="PIR" id="E64167">
    <property type="entry name" value="E64167"/>
</dbReference>
<dbReference type="RefSeq" id="NP_439287.1">
    <property type="nucleotide sequence ID" value="NC_000907.1"/>
</dbReference>
<dbReference type="SMR" id="P45056"/>
<dbReference type="STRING" id="71421.HI_1129"/>
<dbReference type="EnsemblBacteria" id="AAC22784">
    <property type="protein sequence ID" value="AAC22784"/>
    <property type="gene ID" value="HI_1129"/>
</dbReference>
<dbReference type="KEGG" id="hin:HI_1129"/>
<dbReference type="PATRIC" id="fig|71421.8.peg.1179"/>
<dbReference type="eggNOG" id="COG2001">
    <property type="taxonomic scope" value="Bacteria"/>
</dbReference>
<dbReference type="HOGENOM" id="CLU_107907_2_0_6"/>
<dbReference type="OrthoDB" id="9807753at2"/>
<dbReference type="PhylomeDB" id="P45056"/>
<dbReference type="BioCyc" id="HINF71421:G1GJ1-1162-MONOMER"/>
<dbReference type="Proteomes" id="UP000000579">
    <property type="component" value="Chromosome"/>
</dbReference>
<dbReference type="GO" id="GO:0005737">
    <property type="term" value="C:cytoplasm"/>
    <property type="evidence" value="ECO:0007669"/>
    <property type="project" value="UniProtKB-UniRule"/>
</dbReference>
<dbReference type="GO" id="GO:0009295">
    <property type="term" value="C:nucleoid"/>
    <property type="evidence" value="ECO:0007669"/>
    <property type="project" value="UniProtKB-SubCell"/>
</dbReference>
<dbReference type="GO" id="GO:0003700">
    <property type="term" value="F:DNA-binding transcription factor activity"/>
    <property type="evidence" value="ECO:0000318"/>
    <property type="project" value="GO_Central"/>
</dbReference>
<dbReference type="GO" id="GO:0000976">
    <property type="term" value="F:transcription cis-regulatory region binding"/>
    <property type="evidence" value="ECO:0000318"/>
    <property type="project" value="GO_Central"/>
</dbReference>
<dbReference type="GO" id="GO:2000143">
    <property type="term" value="P:negative regulation of DNA-templated transcription initiation"/>
    <property type="evidence" value="ECO:0000318"/>
    <property type="project" value="GO_Central"/>
</dbReference>
<dbReference type="CDD" id="cd16321">
    <property type="entry name" value="MraZ_C"/>
    <property type="match status" value="1"/>
</dbReference>
<dbReference type="CDD" id="cd16320">
    <property type="entry name" value="MraZ_N"/>
    <property type="match status" value="1"/>
</dbReference>
<dbReference type="FunFam" id="3.40.1550.20:FF:000001">
    <property type="entry name" value="Transcriptional regulator MraZ"/>
    <property type="match status" value="1"/>
</dbReference>
<dbReference type="Gene3D" id="3.40.1550.20">
    <property type="entry name" value="Transcriptional regulator MraZ domain"/>
    <property type="match status" value="1"/>
</dbReference>
<dbReference type="HAMAP" id="MF_01008">
    <property type="entry name" value="MraZ"/>
    <property type="match status" value="1"/>
</dbReference>
<dbReference type="InterPro" id="IPR003444">
    <property type="entry name" value="MraZ"/>
</dbReference>
<dbReference type="InterPro" id="IPR035644">
    <property type="entry name" value="MraZ_C"/>
</dbReference>
<dbReference type="InterPro" id="IPR020603">
    <property type="entry name" value="MraZ_dom"/>
</dbReference>
<dbReference type="InterPro" id="IPR035642">
    <property type="entry name" value="MraZ_N"/>
</dbReference>
<dbReference type="InterPro" id="IPR038619">
    <property type="entry name" value="MraZ_sf"/>
</dbReference>
<dbReference type="InterPro" id="IPR007159">
    <property type="entry name" value="SpoVT-AbrB_dom"/>
</dbReference>
<dbReference type="InterPro" id="IPR037914">
    <property type="entry name" value="SpoVT-AbrB_sf"/>
</dbReference>
<dbReference type="NCBIfam" id="TIGR00242">
    <property type="entry name" value="division/cell wall cluster transcriptional repressor MraZ"/>
    <property type="match status" value="1"/>
</dbReference>
<dbReference type="PANTHER" id="PTHR34701">
    <property type="entry name" value="TRANSCRIPTIONAL REGULATOR MRAZ"/>
    <property type="match status" value="1"/>
</dbReference>
<dbReference type="PANTHER" id="PTHR34701:SF1">
    <property type="entry name" value="TRANSCRIPTIONAL REGULATOR MRAZ"/>
    <property type="match status" value="1"/>
</dbReference>
<dbReference type="Pfam" id="PF02381">
    <property type="entry name" value="MraZ"/>
    <property type="match status" value="2"/>
</dbReference>
<dbReference type="SUPFAM" id="SSF89447">
    <property type="entry name" value="AbrB/MazE/MraZ-like"/>
    <property type="match status" value="1"/>
</dbReference>
<dbReference type="PROSITE" id="PS51740">
    <property type="entry name" value="SPOVT_ABRB"/>
    <property type="match status" value="2"/>
</dbReference>
<evidence type="ECO:0000255" key="1">
    <source>
        <dbReference type="HAMAP-Rule" id="MF_01008"/>
    </source>
</evidence>
<evidence type="ECO:0000255" key="2">
    <source>
        <dbReference type="PROSITE-ProRule" id="PRU01076"/>
    </source>
</evidence>
<gene>
    <name evidence="1" type="primary">mraZ</name>
    <name type="ordered locus">HI_1129</name>
</gene>
<protein>
    <recommendedName>
        <fullName>Transcriptional regulator MraZ</fullName>
    </recommendedName>
</protein>
<comment type="subunit">
    <text evidence="1">Forms oligomers.</text>
</comment>
<comment type="subcellular location">
    <subcellularLocation>
        <location evidence="1">Cytoplasm</location>
        <location evidence="1">Nucleoid</location>
    </subcellularLocation>
</comment>
<comment type="similarity">
    <text evidence="1">Belongs to the MraZ family.</text>
</comment>
<sequence>MFRGATAVNLDSKGRVAIPTRYRAEILEKNQGQMVCTVDIRQSCLLLYPLDEWEKIEQKLLALSNFDPTQRRLQRVMLGHATECEMDAQGRILLSGPLRQHAKLEKGLMLVGQLNKFEIWSDVEWHTQIAEDIEIGSSTDFAADALNDFSL</sequence>
<reference key="1">
    <citation type="journal article" date="1995" name="Science">
        <title>Whole-genome random sequencing and assembly of Haemophilus influenzae Rd.</title>
        <authorList>
            <person name="Fleischmann R.D."/>
            <person name="Adams M.D."/>
            <person name="White O."/>
            <person name="Clayton R.A."/>
            <person name="Kirkness E.F."/>
            <person name="Kerlavage A.R."/>
            <person name="Bult C.J."/>
            <person name="Tomb J.-F."/>
            <person name="Dougherty B.A."/>
            <person name="Merrick J.M."/>
            <person name="McKenney K."/>
            <person name="Sutton G.G."/>
            <person name="FitzHugh W."/>
            <person name="Fields C.A."/>
            <person name="Gocayne J.D."/>
            <person name="Scott J.D."/>
            <person name="Shirley R."/>
            <person name="Liu L.-I."/>
            <person name="Glodek A."/>
            <person name="Kelley J.M."/>
            <person name="Weidman J.F."/>
            <person name="Phillips C.A."/>
            <person name="Spriggs T."/>
            <person name="Hedblom E."/>
            <person name="Cotton M.D."/>
            <person name="Utterback T.R."/>
            <person name="Hanna M.C."/>
            <person name="Nguyen D.T."/>
            <person name="Saudek D.M."/>
            <person name="Brandon R.C."/>
            <person name="Fine L.D."/>
            <person name="Fritchman J.L."/>
            <person name="Fuhrmann J.L."/>
            <person name="Geoghagen N.S.M."/>
            <person name="Gnehm C.L."/>
            <person name="McDonald L.A."/>
            <person name="Small K.V."/>
            <person name="Fraser C.M."/>
            <person name="Smith H.O."/>
            <person name="Venter J.C."/>
        </authorList>
    </citation>
    <scope>NUCLEOTIDE SEQUENCE [LARGE SCALE GENOMIC DNA]</scope>
    <source>
        <strain>ATCC 51907 / DSM 11121 / KW20 / Rd</strain>
    </source>
</reference>
<feature type="chain" id="PRO_0000108487" description="Transcriptional regulator MraZ">
    <location>
        <begin position="1"/>
        <end position="151"/>
    </location>
</feature>
<feature type="domain" description="SpoVT-AbrB 1" evidence="2">
    <location>
        <begin position="5"/>
        <end position="52"/>
    </location>
</feature>
<feature type="domain" description="SpoVT-AbrB 2" evidence="2">
    <location>
        <begin position="81"/>
        <end position="124"/>
    </location>
</feature>
<proteinExistence type="inferred from homology"/>
<organism>
    <name type="scientific">Haemophilus influenzae (strain ATCC 51907 / DSM 11121 / KW20 / Rd)</name>
    <dbReference type="NCBI Taxonomy" id="71421"/>
    <lineage>
        <taxon>Bacteria</taxon>
        <taxon>Pseudomonadati</taxon>
        <taxon>Pseudomonadota</taxon>
        <taxon>Gammaproteobacteria</taxon>
        <taxon>Pasteurellales</taxon>
        <taxon>Pasteurellaceae</taxon>
        <taxon>Haemophilus</taxon>
    </lineage>
</organism>
<keyword id="KW-0963">Cytoplasm</keyword>
<keyword id="KW-0238">DNA-binding</keyword>
<keyword id="KW-1185">Reference proteome</keyword>
<keyword id="KW-0677">Repeat</keyword>
<keyword id="KW-0804">Transcription</keyword>
<keyword id="KW-0805">Transcription regulation</keyword>